<feature type="chain" id="PRO_0000141873" description="3-isopropylmalate dehydratase small subunit">
    <location>
        <begin position="1"/>
        <end position="201"/>
    </location>
</feature>
<evidence type="ECO:0000255" key="1">
    <source>
        <dbReference type="HAMAP-Rule" id="MF_01031"/>
    </source>
</evidence>
<proteinExistence type="inferred from homology"/>
<keyword id="KW-0028">Amino-acid biosynthesis</keyword>
<keyword id="KW-0100">Branched-chain amino acid biosynthesis</keyword>
<keyword id="KW-0432">Leucine biosynthesis</keyword>
<keyword id="KW-0456">Lyase</keyword>
<gene>
    <name evidence="1" type="primary">leuD</name>
    <name type="ordered locus">SPA0112</name>
</gene>
<comment type="function">
    <text evidence="1">Catalyzes the isomerization between 2-isopropylmalate and 3-isopropylmalate, via the formation of 2-isopropylmaleate.</text>
</comment>
<comment type="catalytic activity">
    <reaction evidence="1">
        <text>(2R,3S)-3-isopropylmalate = (2S)-2-isopropylmalate</text>
        <dbReference type="Rhea" id="RHEA:32287"/>
        <dbReference type="ChEBI" id="CHEBI:1178"/>
        <dbReference type="ChEBI" id="CHEBI:35121"/>
        <dbReference type="EC" id="4.2.1.33"/>
    </reaction>
</comment>
<comment type="pathway">
    <text evidence="1">Amino-acid biosynthesis; L-leucine biosynthesis; L-leucine from 3-methyl-2-oxobutanoate: step 2/4.</text>
</comment>
<comment type="subunit">
    <text evidence="1">Heterodimer of LeuC and LeuD.</text>
</comment>
<comment type="similarity">
    <text evidence="1">Belongs to the LeuD family. LeuD type 1 subfamily.</text>
</comment>
<organism>
    <name type="scientific">Salmonella paratyphi A (strain ATCC 9150 / SARB42)</name>
    <dbReference type="NCBI Taxonomy" id="295319"/>
    <lineage>
        <taxon>Bacteria</taxon>
        <taxon>Pseudomonadati</taxon>
        <taxon>Pseudomonadota</taxon>
        <taxon>Gammaproteobacteria</taxon>
        <taxon>Enterobacterales</taxon>
        <taxon>Enterobacteriaceae</taxon>
        <taxon>Salmonella</taxon>
    </lineage>
</organism>
<name>LEUD_SALPA</name>
<dbReference type="EC" id="4.2.1.33" evidence="1"/>
<dbReference type="EMBL" id="CP000026">
    <property type="protein sequence ID" value="AAV76145.1"/>
    <property type="molecule type" value="Genomic_DNA"/>
</dbReference>
<dbReference type="RefSeq" id="WP_000818262.1">
    <property type="nucleotide sequence ID" value="NC_006511.1"/>
</dbReference>
<dbReference type="SMR" id="Q5PDG4"/>
<dbReference type="KEGG" id="spt:SPA0112"/>
<dbReference type="HOGENOM" id="CLU_081378_0_3_6"/>
<dbReference type="UniPathway" id="UPA00048">
    <property type="reaction ID" value="UER00071"/>
</dbReference>
<dbReference type="Proteomes" id="UP000008185">
    <property type="component" value="Chromosome"/>
</dbReference>
<dbReference type="GO" id="GO:0009316">
    <property type="term" value="C:3-isopropylmalate dehydratase complex"/>
    <property type="evidence" value="ECO:0007669"/>
    <property type="project" value="InterPro"/>
</dbReference>
<dbReference type="GO" id="GO:0003861">
    <property type="term" value="F:3-isopropylmalate dehydratase activity"/>
    <property type="evidence" value="ECO:0007669"/>
    <property type="project" value="UniProtKB-UniRule"/>
</dbReference>
<dbReference type="GO" id="GO:0009098">
    <property type="term" value="P:L-leucine biosynthetic process"/>
    <property type="evidence" value="ECO:0007669"/>
    <property type="project" value="UniProtKB-UniRule"/>
</dbReference>
<dbReference type="CDD" id="cd01577">
    <property type="entry name" value="IPMI_Swivel"/>
    <property type="match status" value="1"/>
</dbReference>
<dbReference type="FunFam" id="3.20.19.10:FF:000003">
    <property type="entry name" value="3-isopropylmalate dehydratase small subunit"/>
    <property type="match status" value="1"/>
</dbReference>
<dbReference type="Gene3D" id="3.20.19.10">
    <property type="entry name" value="Aconitase, domain 4"/>
    <property type="match status" value="1"/>
</dbReference>
<dbReference type="HAMAP" id="MF_01031">
    <property type="entry name" value="LeuD_type1"/>
    <property type="match status" value="1"/>
</dbReference>
<dbReference type="InterPro" id="IPR004431">
    <property type="entry name" value="3-IsopropMal_deHydase_ssu"/>
</dbReference>
<dbReference type="InterPro" id="IPR015928">
    <property type="entry name" value="Aconitase/3IPM_dehydase_swvl"/>
</dbReference>
<dbReference type="InterPro" id="IPR000573">
    <property type="entry name" value="AconitaseA/IPMdHydase_ssu_swvl"/>
</dbReference>
<dbReference type="InterPro" id="IPR033940">
    <property type="entry name" value="IPMI_Swivel"/>
</dbReference>
<dbReference type="InterPro" id="IPR050075">
    <property type="entry name" value="LeuD"/>
</dbReference>
<dbReference type="NCBIfam" id="TIGR00171">
    <property type="entry name" value="leuD"/>
    <property type="match status" value="1"/>
</dbReference>
<dbReference type="NCBIfam" id="NF002458">
    <property type="entry name" value="PRK01641.1"/>
    <property type="match status" value="1"/>
</dbReference>
<dbReference type="PANTHER" id="PTHR43345:SF5">
    <property type="entry name" value="3-ISOPROPYLMALATE DEHYDRATASE SMALL SUBUNIT"/>
    <property type="match status" value="1"/>
</dbReference>
<dbReference type="PANTHER" id="PTHR43345">
    <property type="entry name" value="3-ISOPROPYLMALATE DEHYDRATASE SMALL SUBUNIT 2-RELATED-RELATED"/>
    <property type="match status" value="1"/>
</dbReference>
<dbReference type="Pfam" id="PF00694">
    <property type="entry name" value="Aconitase_C"/>
    <property type="match status" value="1"/>
</dbReference>
<dbReference type="SUPFAM" id="SSF52016">
    <property type="entry name" value="LeuD/IlvD-like"/>
    <property type="match status" value="1"/>
</dbReference>
<protein>
    <recommendedName>
        <fullName evidence="1">3-isopropylmalate dehydratase small subunit</fullName>
        <ecNumber evidence="1">4.2.1.33</ecNumber>
    </recommendedName>
    <alternativeName>
        <fullName evidence="1">Alpha-IPM isomerase</fullName>
        <shortName evidence="1">IPMI</shortName>
    </alternativeName>
    <alternativeName>
        <fullName evidence="1">Isopropylmalate isomerase</fullName>
    </alternativeName>
</protein>
<accession>Q5PDG4</accession>
<reference key="1">
    <citation type="journal article" date="2004" name="Nat. Genet.">
        <title>Comparison of genome degradation in Paratyphi A and Typhi, human-restricted serovars of Salmonella enterica that cause typhoid.</title>
        <authorList>
            <person name="McClelland M."/>
            <person name="Sanderson K.E."/>
            <person name="Clifton S.W."/>
            <person name="Latreille P."/>
            <person name="Porwollik S."/>
            <person name="Sabo A."/>
            <person name="Meyer R."/>
            <person name="Bieri T."/>
            <person name="Ozersky P."/>
            <person name="McLellan M."/>
            <person name="Harkins C.R."/>
            <person name="Wang C."/>
            <person name="Nguyen C."/>
            <person name="Berghoff A."/>
            <person name="Elliott G."/>
            <person name="Kohlberg S."/>
            <person name="Strong C."/>
            <person name="Du F."/>
            <person name="Carter J."/>
            <person name="Kremizki C."/>
            <person name="Layman D."/>
            <person name="Leonard S."/>
            <person name="Sun H."/>
            <person name="Fulton L."/>
            <person name="Nash W."/>
            <person name="Miner T."/>
            <person name="Minx P."/>
            <person name="Delehaunty K."/>
            <person name="Fronick C."/>
            <person name="Magrini V."/>
            <person name="Nhan M."/>
            <person name="Warren W."/>
            <person name="Florea L."/>
            <person name="Spieth J."/>
            <person name="Wilson R.K."/>
        </authorList>
    </citation>
    <scope>NUCLEOTIDE SEQUENCE [LARGE SCALE GENOMIC DNA]</scope>
    <source>
        <strain>ATCC 9150 / SARB42</strain>
    </source>
</reference>
<sequence>MAEKFTQHTGLVVPLDAANVDTDAIIPKQFLQKVTRTGFGAHLFNDWRFLDEKGQQPNPEFVLNFPEYQGASILLARENFGCGSSREHAPWALTDYGFKVVIAPSFADIFYGNSFNNQLLPVKLSDEQVDELFTLVKANPGIKFEVDLEAQVVKAGDKTYSFKIDDFRRHCMLNGLDSIGLTLQHEDAIAEYENKQPAFMR</sequence>